<comment type="function">
    <text evidence="1">Involved in transcription antitermination. Required for transcription of ribosomal RNA (rRNA) genes. Binds specifically to the boxA antiterminator sequence of the ribosomal RNA (rrn) operons.</text>
</comment>
<comment type="similarity">
    <text evidence="1 2">Belongs to the NusB family.</text>
</comment>
<comment type="sequence caution" evidence="2">
    <conflict type="frameshift">
        <sequence resource="EMBL-CDS" id="AAK46918"/>
    </conflict>
</comment>
<name>NUSB_MYCTO</name>
<sequence length="156" mass="16740">MSDRKPVRGRHQARKRAVALLFEAEVRGISAAEVVDTRAALAEAKPDIARLHPYTAAVARGVSEHAAHIDDLITAHLRGWTLDRLPAVDRAILRVSVWELLHAADVPEPVVVDEAVQLAKELSTDDSPGFVNGVLGQVMLVTPQLRAAAQAVRGGA</sequence>
<evidence type="ECO:0000255" key="1">
    <source>
        <dbReference type="HAMAP-Rule" id="MF_00073"/>
    </source>
</evidence>
<evidence type="ECO:0000305" key="2"/>
<accession>P9WIV0</accession>
<accession>L0TCN2</accession>
<accession>P95020</accession>
<organism>
    <name type="scientific">Mycobacterium tuberculosis (strain CDC 1551 / Oshkosh)</name>
    <dbReference type="NCBI Taxonomy" id="83331"/>
    <lineage>
        <taxon>Bacteria</taxon>
        <taxon>Bacillati</taxon>
        <taxon>Actinomycetota</taxon>
        <taxon>Actinomycetes</taxon>
        <taxon>Mycobacteriales</taxon>
        <taxon>Mycobacteriaceae</taxon>
        <taxon>Mycobacterium</taxon>
        <taxon>Mycobacterium tuberculosis complex</taxon>
    </lineage>
</organism>
<proteinExistence type="inferred from homology"/>
<reference key="1">
    <citation type="journal article" date="2002" name="J. Bacteriol.">
        <title>Whole-genome comparison of Mycobacterium tuberculosis clinical and laboratory strains.</title>
        <authorList>
            <person name="Fleischmann R.D."/>
            <person name="Alland D."/>
            <person name="Eisen J.A."/>
            <person name="Carpenter L."/>
            <person name="White O."/>
            <person name="Peterson J.D."/>
            <person name="DeBoy R.T."/>
            <person name="Dodson R.J."/>
            <person name="Gwinn M.L."/>
            <person name="Haft D.H."/>
            <person name="Hickey E.K."/>
            <person name="Kolonay J.F."/>
            <person name="Nelson W.C."/>
            <person name="Umayam L.A."/>
            <person name="Ermolaeva M.D."/>
            <person name="Salzberg S.L."/>
            <person name="Delcher A."/>
            <person name="Utterback T.R."/>
            <person name="Weidman J.F."/>
            <person name="Khouri H.M."/>
            <person name="Gill J."/>
            <person name="Mikula A."/>
            <person name="Bishai W."/>
            <person name="Jacobs W.R. Jr."/>
            <person name="Venter J.C."/>
            <person name="Fraser C.M."/>
        </authorList>
    </citation>
    <scope>NUCLEOTIDE SEQUENCE [LARGE SCALE GENOMIC DNA]</scope>
    <source>
        <strain>CDC 1551 / Oshkosh</strain>
    </source>
</reference>
<keyword id="KW-1185">Reference proteome</keyword>
<keyword id="KW-0694">RNA-binding</keyword>
<keyword id="KW-0804">Transcription</keyword>
<keyword id="KW-0889">Transcription antitermination</keyword>
<keyword id="KW-0805">Transcription regulation</keyword>
<gene>
    <name evidence="1" type="primary">nusB</name>
    <name type="ordered locus">MT2608</name>
</gene>
<protein>
    <recommendedName>
        <fullName evidence="1">Transcription antitermination protein NusB</fullName>
    </recommendedName>
    <alternativeName>
        <fullName evidence="1">Antitermination factor NusB</fullName>
    </alternativeName>
</protein>
<dbReference type="EMBL" id="AE000516">
    <property type="protein sequence ID" value="AAK46918.1"/>
    <property type="status" value="ALT_FRAME"/>
    <property type="molecule type" value="Genomic_DNA"/>
</dbReference>
<dbReference type="PIR" id="A70658">
    <property type="entry name" value="A70658"/>
</dbReference>
<dbReference type="RefSeq" id="WP_003899364.1">
    <property type="nucleotide sequence ID" value="NZ_KK341227.1"/>
</dbReference>
<dbReference type="SMR" id="P9WIV0"/>
<dbReference type="KEGG" id="mtc:MT2608"/>
<dbReference type="PATRIC" id="fig|83331.31.peg.2814"/>
<dbReference type="HOGENOM" id="CLU_959168_0_0_11"/>
<dbReference type="Proteomes" id="UP000001020">
    <property type="component" value="Chromosome"/>
</dbReference>
<dbReference type="GO" id="GO:0005829">
    <property type="term" value="C:cytosol"/>
    <property type="evidence" value="ECO:0007669"/>
    <property type="project" value="TreeGrafter"/>
</dbReference>
<dbReference type="GO" id="GO:0003723">
    <property type="term" value="F:RNA binding"/>
    <property type="evidence" value="ECO:0007669"/>
    <property type="project" value="UniProtKB-UniRule"/>
</dbReference>
<dbReference type="GO" id="GO:0006353">
    <property type="term" value="P:DNA-templated transcription termination"/>
    <property type="evidence" value="ECO:0007669"/>
    <property type="project" value="UniProtKB-UniRule"/>
</dbReference>
<dbReference type="GO" id="GO:0031564">
    <property type="term" value="P:transcription antitermination"/>
    <property type="evidence" value="ECO:0007669"/>
    <property type="project" value="UniProtKB-KW"/>
</dbReference>
<dbReference type="CDD" id="cd00619">
    <property type="entry name" value="Terminator_NusB"/>
    <property type="match status" value="1"/>
</dbReference>
<dbReference type="Gene3D" id="1.10.940.10">
    <property type="entry name" value="NusB-like"/>
    <property type="match status" value="1"/>
</dbReference>
<dbReference type="HAMAP" id="MF_00073">
    <property type="entry name" value="NusB"/>
    <property type="match status" value="1"/>
</dbReference>
<dbReference type="InterPro" id="IPR035926">
    <property type="entry name" value="NusB-like_sf"/>
</dbReference>
<dbReference type="InterPro" id="IPR011605">
    <property type="entry name" value="NusB_fam"/>
</dbReference>
<dbReference type="InterPro" id="IPR006027">
    <property type="entry name" value="NusB_RsmB_TIM44"/>
</dbReference>
<dbReference type="NCBIfam" id="TIGR01951">
    <property type="entry name" value="nusB"/>
    <property type="match status" value="1"/>
</dbReference>
<dbReference type="PANTHER" id="PTHR11078:SF3">
    <property type="entry name" value="ANTITERMINATION NUSB DOMAIN-CONTAINING PROTEIN"/>
    <property type="match status" value="1"/>
</dbReference>
<dbReference type="PANTHER" id="PTHR11078">
    <property type="entry name" value="N UTILIZATION SUBSTANCE PROTEIN B-RELATED"/>
    <property type="match status" value="1"/>
</dbReference>
<dbReference type="Pfam" id="PF01029">
    <property type="entry name" value="NusB"/>
    <property type="match status" value="1"/>
</dbReference>
<dbReference type="SUPFAM" id="SSF48013">
    <property type="entry name" value="NusB-like"/>
    <property type="match status" value="1"/>
</dbReference>
<feature type="chain" id="PRO_0000427941" description="Transcription antitermination protein NusB">
    <location>
        <begin position="1"/>
        <end position="156"/>
    </location>
</feature>